<protein>
    <recommendedName>
        <fullName evidence="1">Transcriptional repressor NrdR</fullName>
    </recommendedName>
</protein>
<feature type="chain" id="PRO_1000080703" description="Transcriptional repressor NrdR">
    <location>
        <begin position="1"/>
        <end position="149"/>
    </location>
</feature>
<feature type="domain" description="ATP-cone" evidence="1">
    <location>
        <begin position="49"/>
        <end position="139"/>
    </location>
</feature>
<feature type="zinc finger region" evidence="1">
    <location>
        <begin position="3"/>
        <end position="34"/>
    </location>
</feature>
<evidence type="ECO:0000255" key="1">
    <source>
        <dbReference type="HAMAP-Rule" id="MF_00440"/>
    </source>
</evidence>
<dbReference type="EMBL" id="CP000644">
    <property type="protein sequence ID" value="ABO89109.1"/>
    <property type="molecule type" value="Genomic_DNA"/>
</dbReference>
<dbReference type="RefSeq" id="WP_005317604.1">
    <property type="nucleotide sequence ID" value="NC_009348.1"/>
</dbReference>
<dbReference type="SMR" id="A4SJN7"/>
<dbReference type="STRING" id="29491.GCA_000820065_01206"/>
<dbReference type="GeneID" id="79878640"/>
<dbReference type="KEGG" id="asa:ASA_0978"/>
<dbReference type="eggNOG" id="COG1327">
    <property type="taxonomic scope" value="Bacteria"/>
</dbReference>
<dbReference type="HOGENOM" id="CLU_108412_0_0_6"/>
<dbReference type="Proteomes" id="UP000000225">
    <property type="component" value="Chromosome"/>
</dbReference>
<dbReference type="GO" id="GO:0005524">
    <property type="term" value="F:ATP binding"/>
    <property type="evidence" value="ECO:0007669"/>
    <property type="project" value="UniProtKB-KW"/>
</dbReference>
<dbReference type="GO" id="GO:0003677">
    <property type="term" value="F:DNA binding"/>
    <property type="evidence" value="ECO:0007669"/>
    <property type="project" value="UniProtKB-KW"/>
</dbReference>
<dbReference type="GO" id="GO:0008270">
    <property type="term" value="F:zinc ion binding"/>
    <property type="evidence" value="ECO:0007669"/>
    <property type="project" value="UniProtKB-UniRule"/>
</dbReference>
<dbReference type="GO" id="GO:0045892">
    <property type="term" value="P:negative regulation of DNA-templated transcription"/>
    <property type="evidence" value="ECO:0007669"/>
    <property type="project" value="UniProtKB-UniRule"/>
</dbReference>
<dbReference type="HAMAP" id="MF_00440">
    <property type="entry name" value="NrdR"/>
    <property type="match status" value="1"/>
</dbReference>
<dbReference type="InterPro" id="IPR005144">
    <property type="entry name" value="ATP-cone_dom"/>
</dbReference>
<dbReference type="InterPro" id="IPR055173">
    <property type="entry name" value="NrdR-like_N"/>
</dbReference>
<dbReference type="InterPro" id="IPR003796">
    <property type="entry name" value="RNR_NrdR-like"/>
</dbReference>
<dbReference type="NCBIfam" id="TIGR00244">
    <property type="entry name" value="transcriptional regulator NrdR"/>
    <property type="match status" value="1"/>
</dbReference>
<dbReference type="PANTHER" id="PTHR30455">
    <property type="entry name" value="TRANSCRIPTIONAL REPRESSOR NRDR"/>
    <property type="match status" value="1"/>
</dbReference>
<dbReference type="PANTHER" id="PTHR30455:SF2">
    <property type="entry name" value="TRANSCRIPTIONAL REPRESSOR NRDR"/>
    <property type="match status" value="1"/>
</dbReference>
<dbReference type="Pfam" id="PF03477">
    <property type="entry name" value="ATP-cone"/>
    <property type="match status" value="1"/>
</dbReference>
<dbReference type="Pfam" id="PF22811">
    <property type="entry name" value="Zn_ribbon_NrdR"/>
    <property type="match status" value="1"/>
</dbReference>
<dbReference type="PROSITE" id="PS51161">
    <property type="entry name" value="ATP_CONE"/>
    <property type="match status" value="1"/>
</dbReference>
<name>NRDR_AERS4</name>
<accession>A4SJN7</accession>
<proteinExistence type="inferred from homology"/>
<comment type="function">
    <text evidence="1">Negatively regulates transcription of bacterial ribonucleotide reductase nrd genes and operons by binding to NrdR-boxes.</text>
</comment>
<comment type="cofactor">
    <cofactor evidence="1">
        <name>Zn(2+)</name>
        <dbReference type="ChEBI" id="CHEBI:29105"/>
    </cofactor>
    <text evidence="1">Binds 1 zinc ion.</text>
</comment>
<comment type="similarity">
    <text evidence="1">Belongs to the NrdR family.</text>
</comment>
<keyword id="KW-0067">ATP-binding</keyword>
<keyword id="KW-0238">DNA-binding</keyword>
<keyword id="KW-0479">Metal-binding</keyword>
<keyword id="KW-0547">Nucleotide-binding</keyword>
<keyword id="KW-0678">Repressor</keyword>
<keyword id="KW-0804">Transcription</keyword>
<keyword id="KW-0805">Transcription regulation</keyword>
<keyword id="KW-0862">Zinc</keyword>
<keyword id="KW-0863">Zinc-finger</keyword>
<organism>
    <name type="scientific">Aeromonas salmonicida (strain A449)</name>
    <dbReference type="NCBI Taxonomy" id="382245"/>
    <lineage>
        <taxon>Bacteria</taxon>
        <taxon>Pseudomonadati</taxon>
        <taxon>Pseudomonadota</taxon>
        <taxon>Gammaproteobacteria</taxon>
        <taxon>Aeromonadales</taxon>
        <taxon>Aeromonadaceae</taxon>
        <taxon>Aeromonas</taxon>
    </lineage>
</organism>
<sequence length="149" mass="17113">MHCPFCSAVDTKVIDSRLVAEGHQVRRRRECLLCHERFTTFEMAELVMPRVIKSNGSREPFNEEKLRGGILRALEKRPVSMEAIEKGVNHIKSCLRATGEREVASQLVGNLVMDELKSLDKVAYIRFASVYRSFEDIREFGEEIAKLEK</sequence>
<reference key="1">
    <citation type="journal article" date="2008" name="BMC Genomics">
        <title>The genome of Aeromonas salmonicida subsp. salmonicida A449: insights into the evolution of a fish pathogen.</title>
        <authorList>
            <person name="Reith M.E."/>
            <person name="Singh R.K."/>
            <person name="Curtis B."/>
            <person name="Boyd J.M."/>
            <person name="Bouevitch A."/>
            <person name="Kimball J."/>
            <person name="Munholland J."/>
            <person name="Murphy C."/>
            <person name="Sarty D."/>
            <person name="Williams J."/>
            <person name="Nash J.H."/>
            <person name="Johnson S.C."/>
            <person name="Brown L.L."/>
        </authorList>
    </citation>
    <scope>NUCLEOTIDE SEQUENCE [LARGE SCALE GENOMIC DNA]</scope>
    <source>
        <strain>A449</strain>
    </source>
</reference>
<gene>
    <name evidence="1" type="primary">nrdR</name>
    <name type="ordered locus">ASA_0978</name>
</gene>